<evidence type="ECO:0000250" key="1">
    <source>
        <dbReference type="UniProtKB" id="Q9NXW2"/>
    </source>
</evidence>
<evidence type="ECO:0000255" key="2"/>
<evidence type="ECO:0000255" key="3">
    <source>
        <dbReference type="PROSITE-ProRule" id="PRU00286"/>
    </source>
</evidence>
<evidence type="ECO:0000256" key="4">
    <source>
        <dbReference type="SAM" id="MobiDB-lite"/>
    </source>
</evidence>
<evidence type="ECO:0000305" key="5"/>
<feature type="chain" id="PRO_0000253762" description="DnaJ homolog subfamily B member 12">
    <location>
        <begin position="1"/>
        <end position="370"/>
    </location>
</feature>
<feature type="transmembrane region" description="Helical" evidence="2">
    <location>
        <begin position="242"/>
        <end position="262"/>
    </location>
</feature>
<feature type="domain" description="J" evidence="3">
    <location>
        <begin position="110"/>
        <end position="174"/>
    </location>
</feature>
<feature type="region of interest" description="Disordered" evidence="4">
    <location>
        <begin position="51"/>
        <end position="92"/>
    </location>
</feature>
<feature type="modified residue" description="N-acetylmethionine" evidence="1">
    <location>
        <position position="1"/>
    </location>
</feature>
<feature type="modified residue" description="Pros-methylhistidine" evidence="1">
    <location>
        <position position="185"/>
    </location>
</feature>
<name>DJB12_BOVIN</name>
<dbReference type="EMBL" id="BT021535">
    <property type="protein sequence ID" value="AAX46382.1"/>
    <property type="molecule type" value="mRNA"/>
</dbReference>
<dbReference type="RefSeq" id="NP_001017946.1">
    <property type="nucleotide sequence ID" value="NM_001017946.1"/>
</dbReference>
<dbReference type="SMR" id="Q58DR2"/>
<dbReference type="FunCoup" id="Q58DR2">
    <property type="interactions" value="2654"/>
</dbReference>
<dbReference type="STRING" id="9913.ENSBTAP00000018144"/>
<dbReference type="PaxDb" id="9913-ENSBTAP00000018144"/>
<dbReference type="GeneID" id="533603"/>
<dbReference type="KEGG" id="bta:533603"/>
<dbReference type="CTD" id="54788"/>
<dbReference type="eggNOG" id="KOG0714">
    <property type="taxonomic scope" value="Eukaryota"/>
</dbReference>
<dbReference type="InParanoid" id="Q58DR2"/>
<dbReference type="OrthoDB" id="442087at2759"/>
<dbReference type="Proteomes" id="UP000009136">
    <property type="component" value="Unplaced"/>
</dbReference>
<dbReference type="GO" id="GO:0005783">
    <property type="term" value="C:endoplasmic reticulum"/>
    <property type="evidence" value="ECO:0000250"/>
    <property type="project" value="UniProtKB"/>
</dbReference>
<dbReference type="GO" id="GO:0005789">
    <property type="term" value="C:endoplasmic reticulum membrane"/>
    <property type="evidence" value="ECO:0000250"/>
    <property type="project" value="UniProtKB"/>
</dbReference>
<dbReference type="GO" id="GO:0031965">
    <property type="term" value="C:nuclear membrane"/>
    <property type="evidence" value="ECO:0007669"/>
    <property type="project" value="UniProtKB-SubCell"/>
</dbReference>
<dbReference type="GO" id="GO:0030544">
    <property type="term" value="F:Hsp70 protein binding"/>
    <property type="evidence" value="ECO:0000318"/>
    <property type="project" value="GO_Central"/>
</dbReference>
<dbReference type="GO" id="GO:0071218">
    <property type="term" value="P:cellular response to misfolded protein"/>
    <property type="evidence" value="ECO:0000250"/>
    <property type="project" value="UniProtKB"/>
</dbReference>
<dbReference type="GO" id="GO:0051085">
    <property type="term" value="P:chaperone cofactor-dependent protein refolding"/>
    <property type="evidence" value="ECO:0000250"/>
    <property type="project" value="UniProtKB"/>
</dbReference>
<dbReference type="GO" id="GO:0036503">
    <property type="term" value="P:ERAD pathway"/>
    <property type="evidence" value="ECO:0000250"/>
    <property type="project" value="UniProtKB"/>
</dbReference>
<dbReference type="GO" id="GO:0065003">
    <property type="term" value="P:protein-containing complex assembly"/>
    <property type="evidence" value="ECO:0000250"/>
    <property type="project" value="UniProtKB"/>
</dbReference>
<dbReference type="CDD" id="cd06257">
    <property type="entry name" value="DnaJ"/>
    <property type="match status" value="1"/>
</dbReference>
<dbReference type="FunFam" id="1.10.287.110:FF:000004">
    <property type="entry name" value="DnaJ (Hsp40) homolog, subfamily B, member 14"/>
    <property type="match status" value="1"/>
</dbReference>
<dbReference type="Gene3D" id="1.10.287.110">
    <property type="entry name" value="DnaJ domain"/>
    <property type="match status" value="1"/>
</dbReference>
<dbReference type="InterPro" id="IPR001623">
    <property type="entry name" value="DnaJ_domain"/>
</dbReference>
<dbReference type="InterPro" id="IPR018253">
    <property type="entry name" value="DnaJ_domain_CS"/>
</dbReference>
<dbReference type="InterPro" id="IPR051100">
    <property type="entry name" value="DnaJ_subfamily_B/C"/>
</dbReference>
<dbReference type="InterPro" id="IPR015399">
    <property type="entry name" value="DUF1977_DnaJ-like"/>
</dbReference>
<dbReference type="InterPro" id="IPR036869">
    <property type="entry name" value="J_dom_sf"/>
</dbReference>
<dbReference type="PANTHER" id="PTHR43908">
    <property type="entry name" value="AT29763P-RELATED"/>
    <property type="match status" value="1"/>
</dbReference>
<dbReference type="PANTHER" id="PTHR43908:SF8">
    <property type="entry name" value="DNAJ HOMOLOG SUBFAMILY B MEMBER 12"/>
    <property type="match status" value="1"/>
</dbReference>
<dbReference type="Pfam" id="PF00226">
    <property type="entry name" value="DnaJ"/>
    <property type="match status" value="1"/>
</dbReference>
<dbReference type="Pfam" id="PF09320">
    <property type="entry name" value="DUF1977"/>
    <property type="match status" value="1"/>
</dbReference>
<dbReference type="PRINTS" id="PR00625">
    <property type="entry name" value="JDOMAIN"/>
</dbReference>
<dbReference type="SMART" id="SM00271">
    <property type="entry name" value="DnaJ"/>
    <property type="match status" value="1"/>
</dbReference>
<dbReference type="SUPFAM" id="SSF46565">
    <property type="entry name" value="Chaperone J-domain"/>
    <property type="match status" value="1"/>
</dbReference>
<dbReference type="PROSITE" id="PS00636">
    <property type="entry name" value="DNAJ_1"/>
    <property type="match status" value="1"/>
</dbReference>
<dbReference type="PROSITE" id="PS50076">
    <property type="entry name" value="DNAJ_2"/>
    <property type="match status" value="1"/>
</dbReference>
<proteinExistence type="evidence at transcript level"/>
<comment type="function">
    <text evidence="1">Acts as a co-chaperone with HSPA8/Hsc70; required to promote protein folding and trafficking, prevent aggregation of client proteins, and promote unfolded proteins to endoplasmic reticulum-associated degradation (ERAD) pathway. Acts by determining HSPA8/Hsc70's ATPase and polypeptide-binding activities. Can also act independently of HSPA8/Hsc70: together with DNAJB14, acts as a chaperone that promotes maturation of potassium channels KCND2 and KCNH2 by stabilizing nascent channel subunits and assembling them into tetramers. While stabilization of nascent channel proteins is dependent on HSPA8/Hsc70, the process of oligomerization of channel subunits is independent of HSPA8/Hsc70. When overexpressed, forms membranous structures together with DNAJB14 and HSPA8/Hsc70 within the nucleus; the role of these structures, named DJANGOs, is still unclear.</text>
</comment>
<comment type="subunit">
    <text evidence="1">Homodimer and homotetramer. Interacts (via J domain) with HSPA8/Hsc70. Forms a multiprotein complex, at least composed of DNAJB12, DNAJB14, HSPA8/Hsc70 and SGTA; interaction with DNAJB14 and HSPA8/Hsc70 is direct.</text>
</comment>
<comment type="subcellular location">
    <subcellularLocation>
        <location evidence="1">Endoplasmic reticulum membrane</location>
        <topology evidence="2">Single-pass membrane protein</topology>
    </subcellularLocation>
    <subcellularLocation>
        <location evidence="1">Nucleus membrane</location>
        <topology evidence="1">Single-pass membrane protein</topology>
    </subcellularLocation>
    <text evidence="1">Localizes to the endoplasmic reticulum membrane. When overexpressed, forms membranous structures in the nucleus.</text>
</comment>
<comment type="PTM">
    <text evidence="1">Methylated at His-185 by METTL9.</text>
</comment>
<comment type="similarity">
    <text evidence="5">Belongs to the DnaJ family. DNAJB12/DNAJB14 subfamily.</text>
</comment>
<keyword id="KW-0007">Acetylation</keyword>
<keyword id="KW-0143">Chaperone</keyword>
<keyword id="KW-0256">Endoplasmic reticulum</keyword>
<keyword id="KW-0472">Membrane</keyword>
<keyword id="KW-0488">Methylation</keyword>
<keyword id="KW-0539">Nucleus</keyword>
<keyword id="KW-1185">Reference proteome</keyword>
<keyword id="KW-0812">Transmembrane</keyword>
<keyword id="KW-1133">Transmembrane helix</keyword>
<organism>
    <name type="scientific">Bos taurus</name>
    <name type="common">Bovine</name>
    <dbReference type="NCBI Taxonomy" id="9913"/>
    <lineage>
        <taxon>Eukaryota</taxon>
        <taxon>Metazoa</taxon>
        <taxon>Chordata</taxon>
        <taxon>Craniata</taxon>
        <taxon>Vertebrata</taxon>
        <taxon>Euteleostomi</taxon>
        <taxon>Mammalia</taxon>
        <taxon>Eutheria</taxon>
        <taxon>Laurasiatheria</taxon>
        <taxon>Artiodactyla</taxon>
        <taxon>Ruminantia</taxon>
        <taxon>Pecora</taxon>
        <taxon>Bovidae</taxon>
        <taxon>Bovinae</taxon>
        <taxon>Bos</taxon>
    </lineage>
</organism>
<sequence length="370" mass="41340">MESNKDEAERCISIALKAIQSNQPDRALRFLEKAQRLYPTPRVHALIESLNQKPQPAGDQPQPTEATHTTHRKAAGANTASANGEAGGESTKGYTAEQVAAVKRVKQCKDYYEILGVSRGASDEDLKKAYRKLALKFHPDKNHAPGATEAFKAIGTAYAVLSNPEKRKQYDQFGDDKGQAARHGHGHGDFHRGFEADISPEDLFNMFFGGGFPSSNVHVYSNGRMRYTYHQRQDRRENQGDGGLGVFVQLMPILILILVSALSQLMVSSPPYSLSLRPSVGHVHKRVTDHLNVVYYVADTFSQEYTGSSLKMVERNVEDDYIANLRNNCWKEKQQKEGLLYRARYFGDADMYNKAQKDGAPQAVTDCQRL</sequence>
<reference key="1">
    <citation type="journal article" date="2005" name="BMC Genomics">
        <title>Characterization of 954 bovine full-CDS cDNA sequences.</title>
        <authorList>
            <person name="Harhay G.P."/>
            <person name="Sonstegard T.S."/>
            <person name="Keele J.W."/>
            <person name="Heaton M.P."/>
            <person name="Clawson M.L."/>
            <person name="Snelling W.M."/>
            <person name="Wiedmann R.T."/>
            <person name="Van Tassell C.P."/>
            <person name="Smith T.P.L."/>
        </authorList>
    </citation>
    <scope>NUCLEOTIDE SEQUENCE [LARGE SCALE MRNA]</scope>
</reference>
<accession>Q58DR2</accession>
<gene>
    <name type="primary">DNAJB12</name>
</gene>
<protein>
    <recommendedName>
        <fullName>DnaJ homolog subfamily B member 12</fullName>
    </recommendedName>
</protein>